<name>PRS8B_ARATH</name>
<keyword id="KW-0067">ATP-binding</keyword>
<keyword id="KW-0963">Cytoplasm</keyword>
<keyword id="KW-1017">Isopeptide bond</keyword>
<keyword id="KW-0547">Nucleotide-binding</keyword>
<keyword id="KW-0539">Nucleus</keyword>
<keyword id="KW-0647">Proteasome</keyword>
<keyword id="KW-1185">Reference proteome</keyword>
<keyword id="KW-0832">Ubl conjugation</keyword>
<gene>
    <name type="primary">RPT6B</name>
    <name type="synonym">SUG1</name>
    <name type="ordered locus">At5g20000</name>
    <name type="ORF">F28I16.150</name>
</gene>
<feature type="initiator methionine" description="Removed" evidence="7">
    <location>
        <position position="1"/>
    </location>
</feature>
<feature type="chain" id="PRO_0000391488" description="26S proteasome regulatory subunit 8 homolog B">
    <location>
        <begin position="2"/>
        <end position="419"/>
    </location>
</feature>
<feature type="binding site" evidence="3">
    <location>
        <begin position="202"/>
        <end position="209"/>
    </location>
    <ligand>
        <name>ATP</name>
        <dbReference type="ChEBI" id="CHEBI:30616"/>
    </ligand>
</feature>
<feature type="cross-link" description="Glycyl lysine isopeptide (Lys-Gly) (interchain with G-Cter in ubiquitin)" evidence="2">
    <location>
        <position position="406"/>
    </location>
</feature>
<proteinExistence type="evidence at protein level"/>
<comment type="function">
    <text>The 26S proteasome is involved in the ATP-dependent degradation of ubiquitinated proteins. The regulatory (or ATPase) complex confers ATP dependency and substrate specificity to the 26S complex.</text>
</comment>
<comment type="subunit">
    <text evidence="4 5">Component of the 19S regulatory particle (RP/PA700) base subcomplex of the 26S proteasome. The 26S proteasome is composed of a core protease (CP), known as the 20S proteasome, capped at one or both ends by the 19S regulatory particle (RP/PA700). The RP/PA700 complex is composed of at least 17 different subunits in two subcomplexes, the base and the lid, which form the portions proximal and distal to the 20S proteolytic core, respectively.</text>
</comment>
<comment type="subcellular location">
    <subcellularLocation>
        <location evidence="1">Cytoplasm</location>
    </subcellularLocation>
    <subcellularLocation>
        <location evidence="1">Nucleus</location>
    </subcellularLocation>
</comment>
<comment type="similarity">
    <text evidence="6">Belongs to the AAA ATPase family.</text>
</comment>
<reference key="1">
    <citation type="journal article" date="2000" name="Nature">
        <title>Sequence and analysis of chromosome 5 of the plant Arabidopsis thaliana.</title>
        <authorList>
            <person name="Tabata S."/>
            <person name="Kaneko T."/>
            <person name="Nakamura Y."/>
            <person name="Kotani H."/>
            <person name="Kato T."/>
            <person name="Asamizu E."/>
            <person name="Miyajima N."/>
            <person name="Sasamoto S."/>
            <person name="Kimura T."/>
            <person name="Hosouchi T."/>
            <person name="Kawashima K."/>
            <person name="Kohara M."/>
            <person name="Matsumoto M."/>
            <person name="Matsuno A."/>
            <person name="Muraki A."/>
            <person name="Nakayama S."/>
            <person name="Nakazaki N."/>
            <person name="Naruo K."/>
            <person name="Okumura S."/>
            <person name="Shinpo S."/>
            <person name="Takeuchi C."/>
            <person name="Wada T."/>
            <person name="Watanabe A."/>
            <person name="Yamada M."/>
            <person name="Yasuda M."/>
            <person name="Sato S."/>
            <person name="de la Bastide M."/>
            <person name="Huang E."/>
            <person name="Spiegel L."/>
            <person name="Gnoj L."/>
            <person name="O'Shaughnessy A."/>
            <person name="Preston R."/>
            <person name="Habermann K."/>
            <person name="Murray J."/>
            <person name="Johnson D."/>
            <person name="Rohlfing T."/>
            <person name="Nelson J."/>
            <person name="Stoneking T."/>
            <person name="Pepin K."/>
            <person name="Spieth J."/>
            <person name="Sekhon M."/>
            <person name="Armstrong J."/>
            <person name="Becker M."/>
            <person name="Belter E."/>
            <person name="Cordum H."/>
            <person name="Cordes M."/>
            <person name="Courtney L."/>
            <person name="Courtney W."/>
            <person name="Dante M."/>
            <person name="Du H."/>
            <person name="Edwards J."/>
            <person name="Fryman J."/>
            <person name="Haakensen B."/>
            <person name="Lamar E."/>
            <person name="Latreille P."/>
            <person name="Leonard S."/>
            <person name="Meyer R."/>
            <person name="Mulvaney E."/>
            <person name="Ozersky P."/>
            <person name="Riley A."/>
            <person name="Strowmatt C."/>
            <person name="Wagner-McPherson C."/>
            <person name="Wollam A."/>
            <person name="Yoakum M."/>
            <person name="Bell M."/>
            <person name="Dedhia N."/>
            <person name="Parnell L."/>
            <person name="Shah R."/>
            <person name="Rodriguez M."/>
            <person name="Hoon See L."/>
            <person name="Vil D."/>
            <person name="Baker J."/>
            <person name="Kirchoff K."/>
            <person name="Toth K."/>
            <person name="King L."/>
            <person name="Bahret A."/>
            <person name="Miller B."/>
            <person name="Marra M.A."/>
            <person name="Martienssen R."/>
            <person name="McCombie W.R."/>
            <person name="Wilson R.K."/>
            <person name="Murphy G."/>
            <person name="Bancroft I."/>
            <person name="Volckaert G."/>
            <person name="Wambutt R."/>
            <person name="Duesterhoeft A."/>
            <person name="Stiekema W."/>
            <person name="Pohl T."/>
            <person name="Entian K.-D."/>
            <person name="Terryn N."/>
            <person name="Hartley N."/>
            <person name="Bent E."/>
            <person name="Johnson S."/>
            <person name="Langham S.-A."/>
            <person name="McCullagh B."/>
            <person name="Robben J."/>
            <person name="Grymonprez B."/>
            <person name="Zimmermann W."/>
            <person name="Ramsperger U."/>
            <person name="Wedler H."/>
            <person name="Balke K."/>
            <person name="Wedler E."/>
            <person name="Peters S."/>
            <person name="van Staveren M."/>
            <person name="Dirkse W."/>
            <person name="Mooijman P."/>
            <person name="Klein Lankhorst R."/>
            <person name="Weitzenegger T."/>
            <person name="Bothe G."/>
            <person name="Rose M."/>
            <person name="Hauf J."/>
            <person name="Berneiser S."/>
            <person name="Hempel S."/>
            <person name="Feldpausch M."/>
            <person name="Lamberth S."/>
            <person name="Villarroel R."/>
            <person name="Gielen J."/>
            <person name="Ardiles W."/>
            <person name="Bents O."/>
            <person name="Lemcke K."/>
            <person name="Kolesov G."/>
            <person name="Mayer K.F.X."/>
            <person name="Rudd S."/>
            <person name="Schoof H."/>
            <person name="Schueller C."/>
            <person name="Zaccaria P."/>
            <person name="Mewes H.-W."/>
            <person name="Bevan M."/>
            <person name="Fransz P.F."/>
        </authorList>
    </citation>
    <scope>NUCLEOTIDE SEQUENCE [LARGE SCALE GENOMIC DNA]</scope>
    <source>
        <strain>cv. Columbia</strain>
    </source>
</reference>
<reference key="2">
    <citation type="journal article" date="2017" name="Plant J.">
        <title>Araport11: a complete reannotation of the Arabidopsis thaliana reference genome.</title>
        <authorList>
            <person name="Cheng C.Y."/>
            <person name="Krishnakumar V."/>
            <person name="Chan A.P."/>
            <person name="Thibaud-Nissen F."/>
            <person name="Schobel S."/>
            <person name="Town C.D."/>
        </authorList>
    </citation>
    <scope>GENOME REANNOTATION</scope>
    <source>
        <strain>cv. Columbia</strain>
    </source>
</reference>
<reference key="3">
    <citation type="journal article" date="2003" name="Science">
        <title>Empirical analysis of transcriptional activity in the Arabidopsis genome.</title>
        <authorList>
            <person name="Yamada K."/>
            <person name="Lim J."/>
            <person name="Dale J.M."/>
            <person name="Chen H."/>
            <person name="Shinn P."/>
            <person name="Palm C.J."/>
            <person name="Southwick A.M."/>
            <person name="Wu H.C."/>
            <person name="Kim C.J."/>
            <person name="Nguyen M."/>
            <person name="Pham P.K."/>
            <person name="Cheuk R.F."/>
            <person name="Karlin-Newmann G."/>
            <person name="Liu S.X."/>
            <person name="Lam B."/>
            <person name="Sakano H."/>
            <person name="Wu T."/>
            <person name="Yu G."/>
            <person name="Miranda M."/>
            <person name="Quach H.L."/>
            <person name="Tripp M."/>
            <person name="Chang C.H."/>
            <person name="Lee J.M."/>
            <person name="Toriumi M.J."/>
            <person name="Chan M.M."/>
            <person name="Tang C.C."/>
            <person name="Onodera C.S."/>
            <person name="Deng J.M."/>
            <person name="Akiyama K."/>
            <person name="Ansari Y."/>
            <person name="Arakawa T."/>
            <person name="Banh J."/>
            <person name="Banno F."/>
            <person name="Bowser L."/>
            <person name="Brooks S.Y."/>
            <person name="Carninci P."/>
            <person name="Chao Q."/>
            <person name="Choy N."/>
            <person name="Enju A."/>
            <person name="Goldsmith A.D."/>
            <person name="Gurjal M."/>
            <person name="Hansen N.F."/>
            <person name="Hayashizaki Y."/>
            <person name="Johnson-Hopson C."/>
            <person name="Hsuan V.W."/>
            <person name="Iida K."/>
            <person name="Karnes M."/>
            <person name="Khan S."/>
            <person name="Koesema E."/>
            <person name="Ishida J."/>
            <person name="Jiang P.X."/>
            <person name="Jones T."/>
            <person name="Kawai J."/>
            <person name="Kamiya A."/>
            <person name="Meyers C."/>
            <person name="Nakajima M."/>
            <person name="Narusaka M."/>
            <person name="Seki M."/>
            <person name="Sakurai T."/>
            <person name="Satou M."/>
            <person name="Tamse R."/>
            <person name="Vaysberg M."/>
            <person name="Wallender E.K."/>
            <person name="Wong C."/>
            <person name="Yamamura Y."/>
            <person name="Yuan S."/>
            <person name="Shinozaki K."/>
            <person name="Davis R.W."/>
            <person name="Theologis A."/>
            <person name="Ecker J.R."/>
        </authorList>
    </citation>
    <scope>NUCLEOTIDE SEQUENCE [LARGE SCALE MRNA]</scope>
    <source>
        <strain>cv. Columbia</strain>
    </source>
</reference>
<reference key="4">
    <citation type="submission" date="2006-07" db="EMBL/GenBank/DDBJ databases">
        <title>Large-scale analysis of RIKEN Arabidopsis full-length (RAFL) cDNAs.</title>
        <authorList>
            <person name="Totoki Y."/>
            <person name="Seki M."/>
            <person name="Ishida J."/>
            <person name="Nakajima M."/>
            <person name="Enju A."/>
            <person name="Kamiya A."/>
            <person name="Narusaka M."/>
            <person name="Shin-i T."/>
            <person name="Nakagawa M."/>
            <person name="Sakamoto N."/>
            <person name="Oishi K."/>
            <person name="Kohara Y."/>
            <person name="Kobayashi M."/>
            <person name="Toyoda A."/>
            <person name="Sakaki Y."/>
            <person name="Sakurai T."/>
            <person name="Iida K."/>
            <person name="Akiyama K."/>
            <person name="Satou M."/>
            <person name="Toyoda T."/>
            <person name="Konagaya A."/>
            <person name="Carninci P."/>
            <person name="Kawai J."/>
            <person name="Hayashizaki Y."/>
            <person name="Shinozaki K."/>
        </authorList>
    </citation>
    <scope>NUCLEOTIDE SEQUENCE [LARGE SCALE MRNA]</scope>
    <source>
        <strain>cv. Columbia</strain>
    </source>
</reference>
<reference key="5">
    <citation type="submission" date="2002-03" db="EMBL/GenBank/DDBJ databases">
        <title>Full-length cDNA from Arabidopsis thaliana.</title>
        <authorList>
            <person name="Brover V.V."/>
            <person name="Troukhan M.E."/>
            <person name="Alexandrov N.A."/>
            <person name="Lu Y.-P."/>
            <person name="Flavell R.B."/>
            <person name="Feldmann K.A."/>
        </authorList>
    </citation>
    <scope>NUCLEOTIDE SEQUENCE [LARGE SCALE MRNA]</scope>
</reference>
<reference key="6">
    <citation type="journal article" date="1999" name="Plant J.">
        <title>Structural and functional analysis of the six regulatory particle triple-A ATPase subunits from the Arabidopsis 26S proteasome.</title>
        <authorList>
            <person name="Fu H."/>
            <person name="Doelling J.H."/>
            <person name="Rubin D.M."/>
            <person name="Vierstra R.D."/>
        </authorList>
    </citation>
    <scope>GENE FAMILY</scope>
    <scope>NOMENCLATURE</scope>
</reference>
<reference key="7">
    <citation type="journal article" date="2004" name="J. Biol. Chem.">
        <title>Purification of the Arabidopsis 26 S proteasome: biochemical and molecular analyses revealed the presence of multiple isoforms.</title>
        <authorList>
            <person name="Yang P."/>
            <person name="Fu H."/>
            <person name="Walker J."/>
            <person name="Papa C.M."/>
            <person name="Smalle J."/>
            <person name="Ju Y.-M."/>
            <person name="Vierstra R.D."/>
        </authorList>
    </citation>
    <scope>SUBUNIT</scope>
    <scope>IDENTIFICATION BY MASS SPECTROMETRY</scope>
</reference>
<reference key="8">
    <citation type="journal article" date="2010" name="J. Biol. Chem.">
        <title>Affinity purification of the Arabidopsis 26 S proteasome reveals a diverse array of plant proteolytic complexes.</title>
        <authorList>
            <person name="Book A.J."/>
            <person name="Gladman N.P."/>
            <person name="Lee S.S."/>
            <person name="Scalf M."/>
            <person name="Smith L.M."/>
            <person name="Vierstra R.D."/>
        </authorList>
    </citation>
    <scope>IDENTIFICATION BY MASS SPECTROMETRY</scope>
    <scope>CHARACTERIZATION OF THE 26S PROTEASOME COMPLEX</scope>
    <scope>SUBUNIT</scope>
    <scope>CLEAVAGE OF INITIATOR METHIONINE</scope>
</reference>
<organism>
    <name type="scientific">Arabidopsis thaliana</name>
    <name type="common">Mouse-ear cress</name>
    <dbReference type="NCBI Taxonomy" id="3702"/>
    <lineage>
        <taxon>Eukaryota</taxon>
        <taxon>Viridiplantae</taxon>
        <taxon>Streptophyta</taxon>
        <taxon>Embryophyta</taxon>
        <taxon>Tracheophyta</taxon>
        <taxon>Spermatophyta</taxon>
        <taxon>Magnoliopsida</taxon>
        <taxon>eudicotyledons</taxon>
        <taxon>Gunneridae</taxon>
        <taxon>Pentapetalae</taxon>
        <taxon>rosids</taxon>
        <taxon>malvids</taxon>
        <taxon>Brassicales</taxon>
        <taxon>Brassicaceae</taxon>
        <taxon>Camelineae</taxon>
        <taxon>Arabidopsis</taxon>
    </lineage>
</organism>
<evidence type="ECO:0000250" key="1"/>
<evidence type="ECO:0000250" key="2">
    <source>
        <dbReference type="UniProtKB" id="Q9SEI2"/>
    </source>
</evidence>
<evidence type="ECO:0000255" key="3"/>
<evidence type="ECO:0000269" key="4">
    <source>
    </source>
</evidence>
<evidence type="ECO:0000269" key="5">
    <source>
    </source>
</evidence>
<evidence type="ECO:0000305" key="6"/>
<evidence type="ECO:0000305" key="7">
    <source>
    </source>
</evidence>
<accession>Q94BQ2</accession>
<protein>
    <recommendedName>
        <fullName>26S proteasome regulatory subunit 8 homolog B</fullName>
    </recommendedName>
    <alternativeName>
        <fullName>26S proteasome AAA-ATPase subunit RPT6b</fullName>
    </alternativeName>
    <alternativeName>
        <fullName>26S proteasome subunit 8 homolog B</fullName>
    </alternativeName>
    <alternativeName>
        <fullName>Regulatory particle triple-A ATPase subunit 6b</fullName>
    </alternativeName>
</protein>
<sequence>MAAVGVEARPPVTAMEETCNVKGAAAKQGEGLNKYYLQHLDELQRLQREKSYNLNRLEAQRNELNSRVRMLREELQLLQEPGSYVGEVVKVMGKNKVLVKVHPEGKYVVDIDKSIDITKLTPSTRVALRNDSYVLHLVLPSKVDPLVNLMKVEKVPDSTYDMIGGLDQQIKEIKEVIELPIKHPELFESLGIAQPKGVLLYGPPGTGKTLLARAVAHHTDCTFIRVSGSELVQKYIGEGSRMVRELFVMAREHAPSIIFMDEIDSIGSARMESGSGNGDSEVQRTMLELLNQLDGFEASNKIKVLMATNRIDILDQALLRPGRIDRKIEFPNPNEESRFDILKIHSRKMNLMRGIDLKKIAEKMNGASGAELKAVCTEAGMFALRERRVHVTQEDFEMAVAKVMKKDTEKNMSLRKLWK</sequence>
<dbReference type="EMBL" id="AF296836">
    <property type="status" value="NOT_ANNOTATED_CDS"/>
    <property type="molecule type" value="Genomic_DNA"/>
</dbReference>
<dbReference type="EMBL" id="CP002688">
    <property type="protein sequence ID" value="AED92778.1"/>
    <property type="molecule type" value="Genomic_DNA"/>
</dbReference>
<dbReference type="EMBL" id="AY039965">
    <property type="protein sequence ID" value="AAK64142.1"/>
    <property type="molecule type" value="mRNA"/>
</dbReference>
<dbReference type="EMBL" id="AY079403">
    <property type="protein sequence ID" value="AAL85134.1"/>
    <property type="molecule type" value="mRNA"/>
</dbReference>
<dbReference type="EMBL" id="AK226206">
    <property type="protein sequence ID" value="BAE98371.1"/>
    <property type="molecule type" value="mRNA"/>
</dbReference>
<dbReference type="EMBL" id="AY087503">
    <property type="protein sequence ID" value="AAM65046.1"/>
    <property type="molecule type" value="mRNA"/>
</dbReference>
<dbReference type="RefSeq" id="NP_197500.1">
    <property type="nucleotide sequence ID" value="NM_122007.4"/>
</dbReference>
<dbReference type="SMR" id="Q94BQ2"/>
<dbReference type="BioGRID" id="17398">
    <property type="interactions" value="83"/>
</dbReference>
<dbReference type="FunCoup" id="Q94BQ2">
    <property type="interactions" value="3444"/>
</dbReference>
<dbReference type="IntAct" id="Q94BQ2">
    <property type="interactions" value="2"/>
</dbReference>
<dbReference type="STRING" id="3702.Q94BQ2"/>
<dbReference type="PaxDb" id="3702-AT5G20000.1"/>
<dbReference type="ProteomicsDB" id="226221"/>
<dbReference type="EnsemblPlants" id="AT5G20000.1">
    <property type="protein sequence ID" value="AT5G20000.1"/>
    <property type="gene ID" value="AT5G20000"/>
</dbReference>
<dbReference type="GeneID" id="832122"/>
<dbReference type="Gramene" id="AT5G20000.1">
    <property type="protein sequence ID" value="AT5G20000.1"/>
    <property type="gene ID" value="AT5G20000"/>
</dbReference>
<dbReference type="KEGG" id="ath:AT5G20000"/>
<dbReference type="Araport" id="AT5G20000"/>
<dbReference type="TAIR" id="AT5G20000"/>
<dbReference type="eggNOG" id="KOG0728">
    <property type="taxonomic scope" value="Eukaryota"/>
</dbReference>
<dbReference type="HOGENOM" id="CLU_000688_2_1_1"/>
<dbReference type="InParanoid" id="Q94BQ2"/>
<dbReference type="OMA" id="NDVNANC"/>
<dbReference type="OrthoDB" id="1850959at2759"/>
<dbReference type="PhylomeDB" id="Q94BQ2"/>
<dbReference type="PRO" id="PR:Q94BQ2"/>
<dbReference type="Proteomes" id="UP000006548">
    <property type="component" value="Chromosome 5"/>
</dbReference>
<dbReference type="ExpressionAtlas" id="Q94BQ2">
    <property type="expression patterns" value="baseline and differential"/>
</dbReference>
<dbReference type="GO" id="GO:0005634">
    <property type="term" value="C:nucleus"/>
    <property type="evidence" value="ECO:0000304"/>
    <property type="project" value="TAIR"/>
</dbReference>
<dbReference type="GO" id="GO:0009536">
    <property type="term" value="C:plastid"/>
    <property type="evidence" value="ECO:0007005"/>
    <property type="project" value="TAIR"/>
</dbReference>
<dbReference type="GO" id="GO:0000502">
    <property type="term" value="C:proteasome complex"/>
    <property type="evidence" value="ECO:0000314"/>
    <property type="project" value="TAIR"/>
</dbReference>
<dbReference type="GO" id="GO:0005524">
    <property type="term" value="F:ATP binding"/>
    <property type="evidence" value="ECO:0007669"/>
    <property type="project" value="UniProtKB-KW"/>
</dbReference>
<dbReference type="GO" id="GO:0016887">
    <property type="term" value="F:ATP hydrolysis activity"/>
    <property type="evidence" value="ECO:0007669"/>
    <property type="project" value="InterPro"/>
</dbReference>
<dbReference type="CDD" id="cd19502">
    <property type="entry name" value="RecA-like_PAN_like"/>
    <property type="match status" value="1"/>
</dbReference>
<dbReference type="FunFam" id="1.10.8.60:FF:000006">
    <property type="entry name" value="26S protease regulatory subunit 8"/>
    <property type="match status" value="1"/>
</dbReference>
<dbReference type="FunFam" id="2.40.50.140:FF:000044">
    <property type="entry name" value="26S protease regulatory subunit 8"/>
    <property type="match status" value="1"/>
</dbReference>
<dbReference type="FunFam" id="3.40.50.300:FF:000030">
    <property type="entry name" value="26S protease regulatory subunit 8"/>
    <property type="match status" value="1"/>
</dbReference>
<dbReference type="Gene3D" id="1.10.8.60">
    <property type="match status" value="1"/>
</dbReference>
<dbReference type="Gene3D" id="2.40.50.140">
    <property type="entry name" value="Nucleic acid-binding proteins"/>
    <property type="match status" value="1"/>
</dbReference>
<dbReference type="Gene3D" id="3.40.50.300">
    <property type="entry name" value="P-loop containing nucleotide triphosphate hydrolases"/>
    <property type="match status" value="1"/>
</dbReference>
<dbReference type="InterPro" id="IPR050221">
    <property type="entry name" value="26S_Proteasome_ATPase"/>
</dbReference>
<dbReference type="InterPro" id="IPR003593">
    <property type="entry name" value="AAA+_ATPase"/>
</dbReference>
<dbReference type="InterPro" id="IPR041569">
    <property type="entry name" value="AAA_lid_3"/>
</dbReference>
<dbReference type="InterPro" id="IPR003959">
    <property type="entry name" value="ATPase_AAA_core"/>
</dbReference>
<dbReference type="InterPro" id="IPR003960">
    <property type="entry name" value="ATPase_AAA_CS"/>
</dbReference>
<dbReference type="InterPro" id="IPR012340">
    <property type="entry name" value="NA-bd_OB-fold"/>
</dbReference>
<dbReference type="InterPro" id="IPR027417">
    <property type="entry name" value="P-loop_NTPase"/>
</dbReference>
<dbReference type="InterPro" id="IPR032501">
    <property type="entry name" value="Prot_ATP_ID_OB_2nd"/>
</dbReference>
<dbReference type="PANTHER" id="PTHR23073">
    <property type="entry name" value="26S PROTEASOME REGULATORY SUBUNIT"/>
    <property type="match status" value="1"/>
</dbReference>
<dbReference type="Pfam" id="PF00004">
    <property type="entry name" value="AAA"/>
    <property type="match status" value="1"/>
</dbReference>
<dbReference type="Pfam" id="PF17862">
    <property type="entry name" value="AAA_lid_3"/>
    <property type="match status" value="1"/>
</dbReference>
<dbReference type="Pfam" id="PF16450">
    <property type="entry name" value="Prot_ATP_ID_OB_C"/>
    <property type="match status" value="1"/>
</dbReference>
<dbReference type="SMART" id="SM00382">
    <property type="entry name" value="AAA"/>
    <property type="match status" value="1"/>
</dbReference>
<dbReference type="SUPFAM" id="SSF52540">
    <property type="entry name" value="P-loop containing nucleoside triphosphate hydrolases"/>
    <property type="match status" value="1"/>
</dbReference>
<dbReference type="PROSITE" id="PS00674">
    <property type="entry name" value="AAA"/>
    <property type="match status" value="1"/>
</dbReference>